<dbReference type="EMBL" id="GU256281">
    <property type="protein sequence ID" value="ADB56984.1"/>
    <property type="molecule type" value="mRNA"/>
</dbReference>
<dbReference type="RefSeq" id="XP_012559539.1">
    <property type="nucleotide sequence ID" value="XM_012704085.1"/>
</dbReference>
<dbReference type="GeneID" id="100207868"/>
<dbReference type="KEGG" id="hmg:100207868"/>
<dbReference type="Proteomes" id="UP000694840">
    <property type="component" value="Unplaced"/>
</dbReference>
<dbReference type="GO" id="GO:0005576">
    <property type="term" value="C:extracellular region"/>
    <property type="evidence" value="ECO:0007669"/>
    <property type="project" value="UniProtKB-SubCell"/>
</dbReference>
<comment type="function">
    <text evidence="1">Antimicrobial peptide with a broad-spectrum antimicrobial activity. Keeps its antibacterial activity under a wide range of salt concentrations that mimic physiological conditions of human blood, which is surprising, since Hydra is an obligate freshwater animal with nearly no salt tolerance. Does not affect red blood cells.</text>
</comment>
<comment type="subcellular location">
    <subcellularLocation>
        <location evidence="1">Secreted</location>
    </subcellularLocation>
    <subcellularLocation>
        <location evidence="1">Target cell membrane</location>
    </subcellularLocation>
</comment>
<comment type="tissue specificity">
    <text evidence="1">Expressed in entodermal epithelium along the body column.</text>
</comment>
<comment type="similarity">
    <text evidence="4">Belongs to the arminin family.</text>
</comment>
<feature type="signal peptide" evidence="2">
    <location>
        <begin position="1"/>
        <end position="18"/>
    </location>
</feature>
<feature type="propeptide" id="PRO_0000461972" evidence="1">
    <location>
        <begin position="19"/>
        <end position="57"/>
    </location>
</feature>
<feature type="peptide" id="PRO_5042803071" description="Arminin 3b" evidence="1">
    <location>
        <begin position="58"/>
        <end position="80"/>
    </location>
</feature>
<feature type="modified residue" description="Serine amide" evidence="1">
    <location>
        <position position="80"/>
    </location>
</feature>
<reference evidence="5" key="1">
    <citation type="journal article" date="2009" name="Antimicrob. Agents Chemother.">
        <title>Activity of the novel peptide arminin against multiresistant human pathogens shows the considerable potential of phylogenetically ancient organisms as drug sources.</title>
        <authorList>
            <person name="Augustin R."/>
            <person name="Anton-Erxleben F."/>
            <person name="Jungnickel S."/>
            <person name="Hemmrich G."/>
            <person name="Spudy B."/>
            <person name="Podschun R."/>
            <person name="Bosch T.C."/>
        </authorList>
    </citation>
    <scope>NUCLEOTIDE SEQUENCE [MRNA]</scope>
    <source>
        <strain>AEP</strain>
    </source>
</reference>
<reference evidence="6" key="2">
    <citation type="submission" date="2024-08" db="UniProtKB">
        <authorList>
            <consortium name="RefSeq"/>
        </authorList>
    </citation>
    <scope>IDENTIFICATION</scope>
    <source>
        <strain evidence="6">105</strain>
    </source>
</reference>
<keyword id="KW-0027">Amidation</keyword>
<keyword id="KW-0044">Antibiotic</keyword>
<keyword id="KW-0929">Antimicrobial</keyword>
<keyword id="KW-0391">Immunity</keyword>
<keyword id="KW-0399">Innate immunity</keyword>
<keyword id="KW-0472">Membrane</keyword>
<keyword id="KW-1185">Reference proteome</keyword>
<keyword id="KW-0964">Secreted</keyword>
<keyword id="KW-0732">Signal</keyword>
<keyword id="KW-1052">Target cell membrane</keyword>
<keyword id="KW-1053">Target membrane</keyword>
<protein>
    <recommendedName>
        <fullName evidence="3">Arminin 3b</fullName>
    </recommendedName>
</protein>
<accession>D2XUV1</accession>
<organism>
    <name type="scientific">Hydra vulgaris</name>
    <name type="common">Hydra</name>
    <name type="synonym">Hydra attenuata</name>
    <dbReference type="NCBI Taxonomy" id="6087"/>
    <lineage>
        <taxon>Eukaryota</taxon>
        <taxon>Metazoa</taxon>
        <taxon>Cnidaria</taxon>
        <taxon>Hydrozoa</taxon>
        <taxon>Hydroidolina</taxon>
        <taxon>Anthoathecata</taxon>
        <taxon>Aplanulata</taxon>
        <taxon>Hydridae</taxon>
        <taxon>Hydra</taxon>
    </lineage>
</organism>
<evidence type="ECO:0000250" key="1">
    <source>
        <dbReference type="UniProtKB" id="D2XUU4"/>
    </source>
</evidence>
<evidence type="ECO:0000255" key="2"/>
<evidence type="ECO:0000303" key="3">
    <source>
    </source>
</evidence>
<evidence type="ECO:0000305" key="4"/>
<evidence type="ECO:0000312" key="5">
    <source>
        <dbReference type="EMBL" id="ADB56984.1"/>
    </source>
</evidence>
<evidence type="ECO:0000312" key="6">
    <source>
        <dbReference type="RefSeq" id="XP_012559539.1"/>
    </source>
</evidence>
<name>ARM3B_HYDVU</name>
<proteinExistence type="inferred from homology"/>
<sequence length="83" mass="9876">MKIVFAILFLTFIALTYARSFEDLKEEIKNEIEKEIFDDLEEESDELDNNVKKFNDAKPWRRWFRWKNIAPLIPVVIAASGKK</sequence>